<gene>
    <name evidence="1" type="primary">rpmI</name>
    <name type="ordered locus">Wbm0658</name>
</gene>
<evidence type="ECO:0000255" key="1">
    <source>
        <dbReference type="HAMAP-Rule" id="MF_00514"/>
    </source>
</evidence>
<evidence type="ECO:0000305" key="2"/>
<dbReference type="EMBL" id="AE017321">
    <property type="protein sequence ID" value="AAW71246.1"/>
    <property type="molecule type" value="Genomic_DNA"/>
</dbReference>
<dbReference type="SMR" id="Q5GRX8"/>
<dbReference type="STRING" id="292805.Wbm0658"/>
<dbReference type="KEGG" id="wbm:Wbm0658"/>
<dbReference type="eggNOG" id="COG0291">
    <property type="taxonomic scope" value="Bacteria"/>
</dbReference>
<dbReference type="HOGENOM" id="CLU_169643_2_1_5"/>
<dbReference type="Proteomes" id="UP000000534">
    <property type="component" value="Chromosome"/>
</dbReference>
<dbReference type="GO" id="GO:0022625">
    <property type="term" value="C:cytosolic large ribosomal subunit"/>
    <property type="evidence" value="ECO:0007669"/>
    <property type="project" value="TreeGrafter"/>
</dbReference>
<dbReference type="GO" id="GO:0003735">
    <property type="term" value="F:structural constituent of ribosome"/>
    <property type="evidence" value="ECO:0007669"/>
    <property type="project" value="InterPro"/>
</dbReference>
<dbReference type="GO" id="GO:0006412">
    <property type="term" value="P:translation"/>
    <property type="evidence" value="ECO:0007669"/>
    <property type="project" value="UniProtKB-UniRule"/>
</dbReference>
<dbReference type="FunFam" id="4.10.410.60:FF:000001">
    <property type="entry name" value="50S ribosomal protein L35"/>
    <property type="match status" value="1"/>
</dbReference>
<dbReference type="Gene3D" id="4.10.410.60">
    <property type="match status" value="1"/>
</dbReference>
<dbReference type="HAMAP" id="MF_00514">
    <property type="entry name" value="Ribosomal_bL35"/>
    <property type="match status" value="1"/>
</dbReference>
<dbReference type="InterPro" id="IPR001706">
    <property type="entry name" value="Ribosomal_bL35"/>
</dbReference>
<dbReference type="InterPro" id="IPR021137">
    <property type="entry name" value="Ribosomal_bL35-like"/>
</dbReference>
<dbReference type="InterPro" id="IPR018265">
    <property type="entry name" value="Ribosomal_bL35_CS"/>
</dbReference>
<dbReference type="InterPro" id="IPR037229">
    <property type="entry name" value="Ribosomal_bL35_sf"/>
</dbReference>
<dbReference type="NCBIfam" id="TIGR00001">
    <property type="entry name" value="rpmI_bact"/>
    <property type="match status" value="1"/>
</dbReference>
<dbReference type="PANTHER" id="PTHR33343">
    <property type="entry name" value="54S RIBOSOMAL PROTEIN BL35M"/>
    <property type="match status" value="1"/>
</dbReference>
<dbReference type="PANTHER" id="PTHR33343:SF1">
    <property type="entry name" value="LARGE RIBOSOMAL SUBUNIT PROTEIN BL35M"/>
    <property type="match status" value="1"/>
</dbReference>
<dbReference type="Pfam" id="PF01632">
    <property type="entry name" value="Ribosomal_L35p"/>
    <property type="match status" value="1"/>
</dbReference>
<dbReference type="PRINTS" id="PR00064">
    <property type="entry name" value="RIBOSOMALL35"/>
</dbReference>
<dbReference type="SUPFAM" id="SSF143034">
    <property type="entry name" value="L35p-like"/>
    <property type="match status" value="1"/>
</dbReference>
<dbReference type="PROSITE" id="PS00936">
    <property type="entry name" value="RIBOSOMAL_L35"/>
    <property type="match status" value="1"/>
</dbReference>
<comment type="similarity">
    <text evidence="1">Belongs to the bacterial ribosomal protein bL35 family.</text>
</comment>
<proteinExistence type="inferred from homology"/>
<keyword id="KW-1185">Reference proteome</keyword>
<keyword id="KW-0687">Ribonucleoprotein</keyword>
<keyword id="KW-0689">Ribosomal protein</keyword>
<protein>
    <recommendedName>
        <fullName evidence="1">Large ribosomal subunit protein bL35</fullName>
    </recommendedName>
    <alternativeName>
        <fullName evidence="2">50S ribosomal protein L35</fullName>
    </alternativeName>
</protein>
<organism>
    <name type="scientific">Wolbachia sp. subsp. Brugia malayi (strain TRS)</name>
    <dbReference type="NCBI Taxonomy" id="292805"/>
    <lineage>
        <taxon>Bacteria</taxon>
        <taxon>Pseudomonadati</taxon>
        <taxon>Pseudomonadota</taxon>
        <taxon>Alphaproteobacteria</taxon>
        <taxon>Rickettsiales</taxon>
        <taxon>Anaplasmataceae</taxon>
        <taxon>Wolbachieae</taxon>
        <taxon>Wolbachia</taxon>
    </lineage>
</organism>
<accession>Q5GRX8</accession>
<sequence>MKLKTKSSVKKRFNLTAKGKVISAQSGKRHGMVKRSKSNIRNQRGTTVLGKSDSRIVKLYIPYGI</sequence>
<name>RL35_WOLTR</name>
<feature type="chain" id="PRO_0000258782" description="Large ribosomal subunit protein bL35">
    <location>
        <begin position="1"/>
        <end position="65"/>
    </location>
</feature>
<reference key="1">
    <citation type="journal article" date="2005" name="PLoS Biol.">
        <title>The Wolbachia genome of Brugia malayi: endosymbiont evolution within a human pathogenic nematode.</title>
        <authorList>
            <person name="Foster J."/>
            <person name="Ganatra M."/>
            <person name="Kamal I."/>
            <person name="Ware J."/>
            <person name="Makarova K."/>
            <person name="Ivanova N."/>
            <person name="Bhattacharyya A."/>
            <person name="Kapatral V."/>
            <person name="Kumar S."/>
            <person name="Posfai J."/>
            <person name="Vincze T."/>
            <person name="Ingram J."/>
            <person name="Moran L."/>
            <person name="Lapidus A."/>
            <person name="Omelchenko M."/>
            <person name="Kyrpides N."/>
            <person name="Ghedin E."/>
            <person name="Wang S."/>
            <person name="Goltsman E."/>
            <person name="Joukov V."/>
            <person name="Ostrovskaya O."/>
            <person name="Tsukerman K."/>
            <person name="Mazur M."/>
            <person name="Comb D."/>
            <person name="Koonin E."/>
            <person name="Slatko B."/>
        </authorList>
    </citation>
    <scope>NUCLEOTIDE SEQUENCE [LARGE SCALE GENOMIC DNA]</scope>
    <source>
        <strain>TRS</strain>
    </source>
</reference>